<keyword id="KW-0067">ATP-binding</keyword>
<keyword id="KW-0319">Glycerol metabolism</keyword>
<keyword id="KW-0418">Kinase</keyword>
<keyword id="KW-0547">Nucleotide-binding</keyword>
<keyword id="KW-0597">Phosphoprotein</keyword>
<keyword id="KW-1185">Reference proteome</keyword>
<keyword id="KW-0808">Transferase</keyword>
<dbReference type="EC" id="2.7.1.30" evidence="1"/>
<dbReference type="EMBL" id="AL591979">
    <property type="protein sequence ID" value="CAC99616.1"/>
    <property type="molecule type" value="Genomic_DNA"/>
</dbReference>
<dbReference type="PIR" id="AB1267">
    <property type="entry name" value="AB1267"/>
</dbReference>
<dbReference type="RefSeq" id="NP_465063.1">
    <property type="nucleotide sequence ID" value="NC_003210.1"/>
</dbReference>
<dbReference type="RefSeq" id="WP_003732584.1">
    <property type="nucleotide sequence ID" value="NZ_CP149495.1"/>
</dbReference>
<dbReference type="SMR" id="Q8Y6Z2"/>
<dbReference type="STRING" id="169963.gene:17594195"/>
<dbReference type="PaxDb" id="169963-lmo1538"/>
<dbReference type="EnsemblBacteria" id="CAC99616">
    <property type="protein sequence ID" value="CAC99616"/>
    <property type="gene ID" value="CAC99616"/>
</dbReference>
<dbReference type="GeneID" id="987807"/>
<dbReference type="KEGG" id="lmo:lmo1538"/>
<dbReference type="PATRIC" id="fig|169963.11.peg.1579"/>
<dbReference type="eggNOG" id="COG0554">
    <property type="taxonomic scope" value="Bacteria"/>
</dbReference>
<dbReference type="HOGENOM" id="CLU_009281_2_3_9"/>
<dbReference type="OrthoDB" id="9805576at2"/>
<dbReference type="PhylomeDB" id="Q8Y6Z2"/>
<dbReference type="BioCyc" id="LMON169963:LMO1538-MONOMER"/>
<dbReference type="UniPathway" id="UPA00618">
    <property type="reaction ID" value="UER00672"/>
</dbReference>
<dbReference type="Proteomes" id="UP000000817">
    <property type="component" value="Chromosome"/>
</dbReference>
<dbReference type="GO" id="GO:0005829">
    <property type="term" value="C:cytosol"/>
    <property type="evidence" value="ECO:0000318"/>
    <property type="project" value="GO_Central"/>
</dbReference>
<dbReference type="GO" id="GO:0005524">
    <property type="term" value="F:ATP binding"/>
    <property type="evidence" value="ECO:0007669"/>
    <property type="project" value="UniProtKB-UniRule"/>
</dbReference>
<dbReference type="GO" id="GO:0004370">
    <property type="term" value="F:glycerol kinase activity"/>
    <property type="evidence" value="ECO:0000250"/>
    <property type="project" value="UniProtKB"/>
</dbReference>
<dbReference type="GO" id="GO:0019563">
    <property type="term" value="P:glycerol catabolic process"/>
    <property type="evidence" value="ECO:0000318"/>
    <property type="project" value="GO_Central"/>
</dbReference>
<dbReference type="GO" id="GO:0006071">
    <property type="term" value="P:glycerol metabolic process"/>
    <property type="evidence" value="ECO:0000250"/>
    <property type="project" value="UniProtKB"/>
</dbReference>
<dbReference type="GO" id="GO:0006072">
    <property type="term" value="P:glycerol-3-phosphate metabolic process"/>
    <property type="evidence" value="ECO:0007669"/>
    <property type="project" value="InterPro"/>
</dbReference>
<dbReference type="CDD" id="cd07786">
    <property type="entry name" value="FGGY_EcGK_like"/>
    <property type="match status" value="1"/>
</dbReference>
<dbReference type="FunFam" id="3.30.420.40:FF:000007">
    <property type="entry name" value="Glycerol kinase"/>
    <property type="match status" value="1"/>
</dbReference>
<dbReference type="FunFam" id="3.30.420.40:FF:000008">
    <property type="entry name" value="Glycerol kinase"/>
    <property type="match status" value="1"/>
</dbReference>
<dbReference type="Gene3D" id="3.30.420.40">
    <property type="match status" value="2"/>
</dbReference>
<dbReference type="HAMAP" id="MF_00186">
    <property type="entry name" value="Glycerol_kin"/>
    <property type="match status" value="1"/>
</dbReference>
<dbReference type="InterPro" id="IPR043129">
    <property type="entry name" value="ATPase_NBD"/>
</dbReference>
<dbReference type="InterPro" id="IPR000577">
    <property type="entry name" value="Carb_kinase_FGGY"/>
</dbReference>
<dbReference type="InterPro" id="IPR018483">
    <property type="entry name" value="Carb_kinase_FGGY_CS"/>
</dbReference>
<dbReference type="InterPro" id="IPR018485">
    <property type="entry name" value="FGGY_C"/>
</dbReference>
<dbReference type="InterPro" id="IPR018484">
    <property type="entry name" value="FGGY_N"/>
</dbReference>
<dbReference type="InterPro" id="IPR005999">
    <property type="entry name" value="Glycerol_kin"/>
</dbReference>
<dbReference type="NCBIfam" id="TIGR01311">
    <property type="entry name" value="glycerol_kin"/>
    <property type="match status" value="1"/>
</dbReference>
<dbReference type="NCBIfam" id="NF000756">
    <property type="entry name" value="PRK00047.1"/>
    <property type="match status" value="1"/>
</dbReference>
<dbReference type="PANTHER" id="PTHR10196:SF69">
    <property type="entry name" value="GLYCEROL KINASE"/>
    <property type="match status" value="1"/>
</dbReference>
<dbReference type="PANTHER" id="PTHR10196">
    <property type="entry name" value="SUGAR KINASE"/>
    <property type="match status" value="1"/>
</dbReference>
<dbReference type="Pfam" id="PF02782">
    <property type="entry name" value="FGGY_C"/>
    <property type="match status" value="1"/>
</dbReference>
<dbReference type="Pfam" id="PF00370">
    <property type="entry name" value="FGGY_N"/>
    <property type="match status" value="1"/>
</dbReference>
<dbReference type="PIRSF" id="PIRSF000538">
    <property type="entry name" value="GlpK"/>
    <property type="match status" value="1"/>
</dbReference>
<dbReference type="SUPFAM" id="SSF53067">
    <property type="entry name" value="Actin-like ATPase domain"/>
    <property type="match status" value="2"/>
</dbReference>
<dbReference type="PROSITE" id="PS00445">
    <property type="entry name" value="FGGY_KINASES_2"/>
    <property type="match status" value="1"/>
</dbReference>
<comment type="function">
    <text evidence="1">Key enzyme in the regulation of glycerol uptake and metabolism. Catalyzes the phosphorylation of glycerol to yield sn-glycerol 3-phosphate.</text>
</comment>
<comment type="catalytic activity">
    <reaction evidence="1">
        <text>glycerol + ATP = sn-glycerol 3-phosphate + ADP + H(+)</text>
        <dbReference type="Rhea" id="RHEA:21644"/>
        <dbReference type="ChEBI" id="CHEBI:15378"/>
        <dbReference type="ChEBI" id="CHEBI:17754"/>
        <dbReference type="ChEBI" id="CHEBI:30616"/>
        <dbReference type="ChEBI" id="CHEBI:57597"/>
        <dbReference type="ChEBI" id="CHEBI:456216"/>
        <dbReference type="EC" id="2.7.1.30"/>
    </reaction>
</comment>
<comment type="activity regulation">
    <text evidence="1">Activated by phosphorylation and inhibited by fructose 1,6-bisphosphate (FBP).</text>
</comment>
<comment type="pathway">
    <text evidence="1">Polyol metabolism; glycerol degradation via glycerol kinase pathway; sn-glycerol 3-phosphate from glycerol: step 1/1.</text>
</comment>
<comment type="subunit">
    <text evidence="1">Homotetramer and homodimer (in equilibrium).</text>
</comment>
<comment type="PTM">
    <text evidence="1">The phosphoenolpyruvate-dependent sugar phosphotransferase system (PTS), including enzyme I, and histidine-containing protein (HPr) are required for the phosphorylation, which leads to the activation of the enzyme.</text>
</comment>
<comment type="similarity">
    <text evidence="1">Belongs to the FGGY kinase family.</text>
</comment>
<proteinExistence type="inferred from homology"/>
<evidence type="ECO:0000255" key="1">
    <source>
        <dbReference type="HAMAP-Rule" id="MF_00186"/>
    </source>
</evidence>
<gene>
    <name evidence="1" type="primary">glpK</name>
    <name type="ordered locus">lmo1538</name>
</gene>
<name>GLPK_LISMO</name>
<sequence>MEKKYILALDQGTTSSRAMIIDEEGEVIGVAQEEFDQIFPKPGWVEHNANEIWASILAVIAGVLLKTNISSKEIAGIGITNQRETTVIWDKESGNPIYNAIVWQSRQTEDICKQLRKDGYEDTIRSKTGLLIDPYFAGTKARWILDHVDGAQERAEKGELLFGTIDTWLVWKLTGGRAHITDYSNASRTLLYNIYDLEWDDELLKMLNIPKAMLPEVRPSSEVYADTVPYHFFGEEVPVAGIAGDQQAALFGQGCFEKGMAKNTYGTGCFLLMNTGEKAVRSENGLLTTLAWGIDGKVEYALEGSIFVAGSAIQWLRDGLRMVRQSSDSENYASRIESSDGVYVVPAFVGLGAPYWDSDVRGAVFGLTRGTEKEQFIRATLESLAYQTRDVLYAMEQDSGISLKTLRVDGGASANNFLMQFQSDILGVPVERPENKETTVLGAAFLAGLAVGVWKDKNEIKKHWKLDKRFEVEMKEEQREDLYEGWHKAVKAAQAFK</sequence>
<feature type="chain" id="PRO_0000059465" description="Glycerol kinase">
    <location>
        <begin position="1"/>
        <end position="497"/>
    </location>
</feature>
<feature type="binding site" evidence="1">
    <location>
        <position position="13"/>
    </location>
    <ligand>
        <name>ADP</name>
        <dbReference type="ChEBI" id="CHEBI:456216"/>
    </ligand>
</feature>
<feature type="binding site" evidence="1">
    <location>
        <position position="13"/>
    </location>
    <ligand>
        <name>ATP</name>
        <dbReference type="ChEBI" id="CHEBI:30616"/>
    </ligand>
</feature>
<feature type="binding site" evidence="1">
    <location>
        <position position="13"/>
    </location>
    <ligand>
        <name>sn-glycerol 3-phosphate</name>
        <dbReference type="ChEBI" id="CHEBI:57597"/>
    </ligand>
</feature>
<feature type="binding site" evidence="1">
    <location>
        <position position="14"/>
    </location>
    <ligand>
        <name>ATP</name>
        <dbReference type="ChEBI" id="CHEBI:30616"/>
    </ligand>
</feature>
<feature type="binding site" evidence="1">
    <location>
        <position position="15"/>
    </location>
    <ligand>
        <name>ATP</name>
        <dbReference type="ChEBI" id="CHEBI:30616"/>
    </ligand>
</feature>
<feature type="binding site" evidence="1">
    <location>
        <position position="17"/>
    </location>
    <ligand>
        <name>ADP</name>
        <dbReference type="ChEBI" id="CHEBI:456216"/>
    </ligand>
</feature>
<feature type="binding site" evidence="1">
    <location>
        <position position="83"/>
    </location>
    <ligand>
        <name>glycerol</name>
        <dbReference type="ChEBI" id="CHEBI:17754"/>
    </ligand>
</feature>
<feature type="binding site" evidence="1">
    <location>
        <position position="83"/>
    </location>
    <ligand>
        <name>sn-glycerol 3-phosphate</name>
        <dbReference type="ChEBI" id="CHEBI:57597"/>
    </ligand>
</feature>
<feature type="binding site" evidence="1">
    <location>
        <position position="84"/>
    </location>
    <ligand>
        <name>glycerol</name>
        <dbReference type="ChEBI" id="CHEBI:17754"/>
    </ligand>
</feature>
<feature type="binding site" evidence="1">
    <location>
        <position position="84"/>
    </location>
    <ligand>
        <name>sn-glycerol 3-phosphate</name>
        <dbReference type="ChEBI" id="CHEBI:57597"/>
    </ligand>
</feature>
<feature type="binding site" evidence="1">
    <location>
        <position position="135"/>
    </location>
    <ligand>
        <name>glycerol</name>
        <dbReference type="ChEBI" id="CHEBI:17754"/>
    </ligand>
</feature>
<feature type="binding site" evidence="1">
    <location>
        <position position="135"/>
    </location>
    <ligand>
        <name>sn-glycerol 3-phosphate</name>
        <dbReference type="ChEBI" id="CHEBI:57597"/>
    </ligand>
</feature>
<feature type="binding site" evidence="1">
    <location>
        <position position="245"/>
    </location>
    <ligand>
        <name>glycerol</name>
        <dbReference type="ChEBI" id="CHEBI:17754"/>
    </ligand>
</feature>
<feature type="binding site" evidence="1">
    <location>
        <position position="245"/>
    </location>
    <ligand>
        <name>sn-glycerol 3-phosphate</name>
        <dbReference type="ChEBI" id="CHEBI:57597"/>
    </ligand>
</feature>
<feature type="binding site" evidence="1">
    <location>
        <position position="246"/>
    </location>
    <ligand>
        <name>glycerol</name>
        <dbReference type="ChEBI" id="CHEBI:17754"/>
    </ligand>
</feature>
<feature type="binding site" evidence="1">
    <location>
        <position position="267"/>
    </location>
    <ligand>
        <name>ADP</name>
        <dbReference type="ChEBI" id="CHEBI:456216"/>
    </ligand>
</feature>
<feature type="binding site" evidence="1">
    <location>
        <position position="267"/>
    </location>
    <ligand>
        <name>ATP</name>
        <dbReference type="ChEBI" id="CHEBI:30616"/>
    </ligand>
</feature>
<feature type="binding site" evidence="1">
    <location>
        <position position="310"/>
    </location>
    <ligand>
        <name>ADP</name>
        <dbReference type="ChEBI" id="CHEBI:456216"/>
    </ligand>
</feature>
<feature type="binding site" evidence="1">
    <location>
        <position position="310"/>
    </location>
    <ligand>
        <name>ATP</name>
        <dbReference type="ChEBI" id="CHEBI:30616"/>
    </ligand>
</feature>
<feature type="binding site" evidence="1">
    <location>
        <position position="314"/>
    </location>
    <ligand>
        <name>ATP</name>
        <dbReference type="ChEBI" id="CHEBI:30616"/>
    </ligand>
</feature>
<feature type="binding site" evidence="1">
    <location>
        <position position="411"/>
    </location>
    <ligand>
        <name>ADP</name>
        <dbReference type="ChEBI" id="CHEBI:456216"/>
    </ligand>
</feature>
<feature type="binding site" evidence="1">
    <location>
        <position position="411"/>
    </location>
    <ligand>
        <name>ATP</name>
        <dbReference type="ChEBI" id="CHEBI:30616"/>
    </ligand>
</feature>
<feature type="binding site" evidence="1">
    <location>
        <position position="415"/>
    </location>
    <ligand>
        <name>ADP</name>
        <dbReference type="ChEBI" id="CHEBI:456216"/>
    </ligand>
</feature>
<feature type="modified residue" description="Phosphohistidine; by HPr" evidence="1">
    <location>
        <position position="231"/>
    </location>
</feature>
<accession>Q8Y6Z2</accession>
<protein>
    <recommendedName>
        <fullName evidence="1">Glycerol kinase</fullName>
        <ecNumber evidence="1">2.7.1.30</ecNumber>
    </recommendedName>
    <alternativeName>
        <fullName evidence="1">ATP:glycerol 3-phosphotransferase</fullName>
    </alternativeName>
    <alternativeName>
        <fullName evidence="1">Glycerokinase</fullName>
        <shortName evidence="1">GK</shortName>
    </alternativeName>
</protein>
<organism>
    <name type="scientific">Listeria monocytogenes serovar 1/2a (strain ATCC BAA-679 / EGD-e)</name>
    <dbReference type="NCBI Taxonomy" id="169963"/>
    <lineage>
        <taxon>Bacteria</taxon>
        <taxon>Bacillati</taxon>
        <taxon>Bacillota</taxon>
        <taxon>Bacilli</taxon>
        <taxon>Bacillales</taxon>
        <taxon>Listeriaceae</taxon>
        <taxon>Listeria</taxon>
    </lineage>
</organism>
<reference key="1">
    <citation type="journal article" date="2001" name="Science">
        <title>Comparative genomics of Listeria species.</title>
        <authorList>
            <person name="Glaser P."/>
            <person name="Frangeul L."/>
            <person name="Buchrieser C."/>
            <person name="Rusniok C."/>
            <person name="Amend A."/>
            <person name="Baquero F."/>
            <person name="Berche P."/>
            <person name="Bloecker H."/>
            <person name="Brandt P."/>
            <person name="Chakraborty T."/>
            <person name="Charbit A."/>
            <person name="Chetouani F."/>
            <person name="Couve E."/>
            <person name="de Daruvar A."/>
            <person name="Dehoux P."/>
            <person name="Domann E."/>
            <person name="Dominguez-Bernal G."/>
            <person name="Duchaud E."/>
            <person name="Durant L."/>
            <person name="Dussurget O."/>
            <person name="Entian K.-D."/>
            <person name="Fsihi H."/>
            <person name="Garcia-del Portillo F."/>
            <person name="Garrido P."/>
            <person name="Gautier L."/>
            <person name="Goebel W."/>
            <person name="Gomez-Lopez N."/>
            <person name="Hain T."/>
            <person name="Hauf J."/>
            <person name="Jackson D."/>
            <person name="Jones L.-M."/>
            <person name="Kaerst U."/>
            <person name="Kreft J."/>
            <person name="Kuhn M."/>
            <person name="Kunst F."/>
            <person name="Kurapkat G."/>
            <person name="Madueno E."/>
            <person name="Maitournam A."/>
            <person name="Mata Vicente J."/>
            <person name="Ng E."/>
            <person name="Nedjari H."/>
            <person name="Nordsiek G."/>
            <person name="Novella S."/>
            <person name="de Pablos B."/>
            <person name="Perez-Diaz J.-C."/>
            <person name="Purcell R."/>
            <person name="Remmel B."/>
            <person name="Rose M."/>
            <person name="Schlueter T."/>
            <person name="Simoes N."/>
            <person name="Tierrez A."/>
            <person name="Vazquez-Boland J.-A."/>
            <person name="Voss H."/>
            <person name="Wehland J."/>
            <person name="Cossart P."/>
        </authorList>
    </citation>
    <scope>NUCLEOTIDE SEQUENCE [LARGE SCALE GENOMIC DNA]</scope>
    <source>
        <strain>ATCC BAA-679 / EGD-e</strain>
    </source>
</reference>